<sequence>TEIQSFNFNGFVPEN</sequence>
<keyword id="KW-0903">Direct protein sequencing</keyword>
<keyword id="KW-0325">Glycoprotein</keyword>
<keyword id="KW-0430">Lectin</keyword>
<accession>P22582</accession>
<organism>
    <name type="scientific">Psophocarpus scandens</name>
    <name type="common">Tropical African winged-bean</name>
    <dbReference type="NCBI Taxonomy" id="3890"/>
    <lineage>
        <taxon>Eukaryota</taxon>
        <taxon>Viridiplantae</taxon>
        <taxon>Streptophyta</taxon>
        <taxon>Embryophyta</taxon>
        <taxon>Tracheophyta</taxon>
        <taxon>Spermatophyta</taxon>
        <taxon>Magnoliopsida</taxon>
        <taxon>eudicotyledons</taxon>
        <taxon>Gunneridae</taxon>
        <taxon>Pentapetalae</taxon>
        <taxon>rosids</taxon>
        <taxon>fabids</taxon>
        <taxon>Fabales</taxon>
        <taxon>Fabaceae</taxon>
        <taxon>Papilionoideae</taxon>
        <taxon>50 kb inversion clade</taxon>
        <taxon>NPAAA clade</taxon>
        <taxon>indigoferoid/millettioid clade</taxon>
        <taxon>Phaseoleae</taxon>
        <taxon>Psophocarpus</taxon>
    </lineage>
</organism>
<comment type="subunit">
    <text>Dimer. The subunits show apparent MW heterogeneity (32000-35000 MW), which may result from different carbohydrate content, AA sequence, or polypeptide length.</text>
</comment>
<comment type="PTM">
    <text>Glycosylated; contains 5-6% carbohydrate.</text>
</comment>
<name>LECA1_PSOSC</name>
<feature type="chain" id="PRO_0000105119" description="Acidic lectin A1">
    <location>
        <begin position="1"/>
        <end position="15" status="greater than"/>
    </location>
</feature>
<feature type="non-terminal residue">
    <location>
        <position position="15"/>
    </location>
</feature>
<reference key="1">
    <citation type="journal article" date="1988" name="Phytochemistry">
        <title>Isolation and characterization of the lectins from the seeds of Psophocarpus scandens.</title>
        <authorList>
            <person name="Kortt A.A."/>
        </authorList>
    </citation>
    <scope>PROTEIN SEQUENCE</scope>
    <source>
        <tissue>Seed</tissue>
    </source>
</reference>
<dbReference type="PIR" id="PA0005">
    <property type="entry name" value="PA0005"/>
</dbReference>
<dbReference type="GO" id="GO:0030246">
    <property type="term" value="F:carbohydrate binding"/>
    <property type="evidence" value="ECO:0007669"/>
    <property type="project" value="UniProtKB-KW"/>
</dbReference>
<proteinExistence type="evidence at protein level"/>
<protein>
    <recommendedName>
        <fullName>Acidic lectin A1</fullName>
    </recommendedName>
</protein>